<reference key="1">
    <citation type="submission" date="2006-03" db="EMBL/GenBank/DDBJ databases">
        <title>Complete sequence of Methylobacillus flagellatus KT.</title>
        <authorList>
            <consortium name="US DOE Joint Genome Institute"/>
            <person name="Copeland A."/>
            <person name="Lucas S."/>
            <person name="Lapidus A."/>
            <person name="Barry K."/>
            <person name="Detter J.C."/>
            <person name="Glavina del Rio T."/>
            <person name="Hammon N."/>
            <person name="Israni S."/>
            <person name="Dalin E."/>
            <person name="Tice H."/>
            <person name="Pitluck S."/>
            <person name="Brettin T."/>
            <person name="Bruce D."/>
            <person name="Han C."/>
            <person name="Tapia R."/>
            <person name="Saunders E."/>
            <person name="Gilna P."/>
            <person name="Schmutz J."/>
            <person name="Larimer F."/>
            <person name="Land M."/>
            <person name="Kyrpides N."/>
            <person name="Anderson I."/>
            <person name="Richardson P."/>
        </authorList>
    </citation>
    <scope>NUCLEOTIDE SEQUENCE [LARGE SCALE GENOMIC DNA]</scope>
    <source>
        <strain>ATCC 51484 / DSM 6875 / VKM B-1610 / KT</strain>
    </source>
</reference>
<accession>Q1H4H6</accession>
<sequence length="616" mass="66009">MPQYRSRTSTHGRNMAGARALWRATGMKEDDFQKPIIAIANSFTQFVPGHVHLKDLGQLVAREIERAGGVAKEFNTIAVDDGIAMGHSGMLYSLPSRDLIADAVEYMVSAHCADALVCISNCDKITPGMLMAALRLNIPVVFVSGGPMEAGKVNWQGNMHKLDLVDAMVAAADSNVSDAESEAIERSACPTCGSCSGMFTANSMNCLTEALGLSLPGNGSTLATHAARKELFLKAGRLIVEITKRYYEQDDESVLPRSIANFKAFENAMSLDVAMGGSTNTVLHLLAAAHEAEVDFTMADIDRISRGVPCICKVAPATAKYHMEDVHRAGGVMAILSELSRAGLIHRDTPTVHSPTLGEALDKWDIMTTNDEDVKKFYRAAPGGISTTIAFSQSMLWPDLDTDRKEGCIRDKDHAYSQDGGLAVLYGNIALDGCIVKTAGVDDSILKFTGRARIFESQDDAVAAILADKIEAGDIVIIRYEGPRGGPGMQEMLYPTSYLKSKGLGKACALLTDGRFSGGTSGLSIGHASPEAAEGGAIGLVEENDIIEIDIPNRTIHLAVKDEVLAHRRAAMEARGKDAWKPVNRQRHISVALRAYAAMSTSAAKGAVRDVSQIEK</sequence>
<comment type="function">
    <text evidence="1">Functions in the biosynthesis of branched-chain amino acids. Catalyzes the dehydration of (2R,3R)-2,3-dihydroxy-3-methylpentanoate (2,3-dihydroxy-3-methylvalerate) into 2-oxo-3-methylpentanoate (2-oxo-3-methylvalerate) and of (2R)-2,3-dihydroxy-3-methylbutanoate (2,3-dihydroxyisovalerate) into 2-oxo-3-methylbutanoate (2-oxoisovalerate), the penultimate precursor to L-isoleucine and L-valine, respectively.</text>
</comment>
<comment type="catalytic activity">
    <reaction evidence="1">
        <text>(2R)-2,3-dihydroxy-3-methylbutanoate = 3-methyl-2-oxobutanoate + H2O</text>
        <dbReference type="Rhea" id="RHEA:24809"/>
        <dbReference type="ChEBI" id="CHEBI:11851"/>
        <dbReference type="ChEBI" id="CHEBI:15377"/>
        <dbReference type="ChEBI" id="CHEBI:49072"/>
        <dbReference type="EC" id="4.2.1.9"/>
    </reaction>
    <physiologicalReaction direction="left-to-right" evidence="1">
        <dbReference type="Rhea" id="RHEA:24810"/>
    </physiologicalReaction>
</comment>
<comment type="catalytic activity">
    <reaction evidence="1">
        <text>(2R,3R)-2,3-dihydroxy-3-methylpentanoate = (S)-3-methyl-2-oxopentanoate + H2O</text>
        <dbReference type="Rhea" id="RHEA:27694"/>
        <dbReference type="ChEBI" id="CHEBI:15377"/>
        <dbReference type="ChEBI" id="CHEBI:35146"/>
        <dbReference type="ChEBI" id="CHEBI:49258"/>
        <dbReference type="EC" id="4.2.1.9"/>
    </reaction>
    <physiologicalReaction direction="left-to-right" evidence="1">
        <dbReference type="Rhea" id="RHEA:27695"/>
    </physiologicalReaction>
</comment>
<comment type="cofactor">
    <cofactor evidence="1">
        <name>[2Fe-2S] cluster</name>
        <dbReference type="ChEBI" id="CHEBI:190135"/>
    </cofactor>
    <text evidence="1">Binds 1 [2Fe-2S] cluster per subunit. This cluster acts as a Lewis acid cofactor.</text>
</comment>
<comment type="cofactor">
    <cofactor evidence="1">
        <name>Mg(2+)</name>
        <dbReference type="ChEBI" id="CHEBI:18420"/>
    </cofactor>
</comment>
<comment type="pathway">
    <text evidence="1">Amino-acid biosynthesis; L-isoleucine biosynthesis; L-isoleucine from 2-oxobutanoate: step 3/4.</text>
</comment>
<comment type="pathway">
    <text evidence="1">Amino-acid biosynthesis; L-valine biosynthesis; L-valine from pyruvate: step 3/4.</text>
</comment>
<comment type="subunit">
    <text evidence="1">Homodimer.</text>
</comment>
<comment type="similarity">
    <text evidence="1">Belongs to the IlvD/Edd family.</text>
</comment>
<name>ILVD_METFK</name>
<proteinExistence type="inferred from homology"/>
<organism>
    <name type="scientific">Methylobacillus flagellatus (strain ATCC 51484 / DSM 6875 / VKM B-1610 / KT)</name>
    <dbReference type="NCBI Taxonomy" id="265072"/>
    <lineage>
        <taxon>Bacteria</taxon>
        <taxon>Pseudomonadati</taxon>
        <taxon>Pseudomonadota</taxon>
        <taxon>Betaproteobacteria</taxon>
        <taxon>Nitrosomonadales</taxon>
        <taxon>Methylophilaceae</taxon>
        <taxon>Methylobacillus</taxon>
    </lineage>
</organism>
<evidence type="ECO:0000255" key="1">
    <source>
        <dbReference type="HAMAP-Rule" id="MF_00012"/>
    </source>
</evidence>
<protein>
    <recommendedName>
        <fullName evidence="1">Dihydroxy-acid dehydratase</fullName>
        <shortName evidence="1">DAD</shortName>
        <ecNumber evidence="1">4.2.1.9</ecNumber>
    </recommendedName>
</protein>
<feature type="chain" id="PRO_1000001005" description="Dihydroxy-acid dehydratase">
    <location>
        <begin position="1"/>
        <end position="616"/>
    </location>
</feature>
<feature type="active site" description="Proton acceptor" evidence="1">
    <location>
        <position position="517"/>
    </location>
</feature>
<feature type="binding site" evidence="1">
    <location>
        <position position="81"/>
    </location>
    <ligand>
        <name>Mg(2+)</name>
        <dbReference type="ChEBI" id="CHEBI:18420"/>
    </ligand>
</feature>
<feature type="binding site" evidence="1">
    <location>
        <position position="122"/>
    </location>
    <ligand>
        <name>[2Fe-2S] cluster</name>
        <dbReference type="ChEBI" id="CHEBI:190135"/>
    </ligand>
</feature>
<feature type="binding site" evidence="1">
    <location>
        <position position="123"/>
    </location>
    <ligand>
        <name>Mg(2+)</name>
        <dbReference type="ChEBI" id="CHEBI:18420"/>
    </ligand>
</feature>
<feature type="binding site" description="via carbamate group" evidence="1">
    <location>
        <position position="124"/>
    </location>
    <ligand>
        <name>Mg(2+)</name>
        <dbReference type="ChEBI" id="CHEBI:18420"/>
    </ligand>
</feature>
<feature type="binding site" evidence="1">
    <location>
        <position position="195"/>
    </location>
    <ligand>
        <name>[2Fe-2S] cluster</name>
        <dbReference type="ChEBI" id="CHEBI:190135"/>
    </ligand>
</feature>
<feature type="binding site" evidence="1">
    <location>
        <position position="491"/>
    </location>
    <ligand>
        <name>Mg(2+)</name>
        <dbReference type="ChEBI" id="CHEBI:18420"/>
    </ligand>
</feature>
<feature type="modified residue" description="N6-carboxylysine" evidence="1">
    <location>
        <position position="124"/>
    </location>
</feature>
<keyword id="KW-0001">2Fe-2S</keyword>
<keyword id="KW-0028">Amino-acid biosynthesis</keyword>
<keyword id="KW-0100">Branched-chain amino acid biosynthesis</keyword>
<keyword id="KW-0408">Iron</keyword>
<keyword id="KW-0411">Iron-sulfur</keyword>
<keyword id="KW-0456">Lyase</keyword>
<keyword id="KW-0460">Magnesium</keyword>
<keyword id="KW-0479">Metal-binding</keyword>
<keyword id="KW-1185">Reference proteome</keyword>
<dbReference type="EC" id="4.2.1.9" evidence="1"/>
<dbReference type="EMBL" id="CP000284">
    <property type="protein sequence ID" value="ABE48611.1"/>
    <property type="molecule type" value="Genomic_DNA"/>
</dbReference>
<dbReference type="RefSeq" id="WP_011478708.1">
    <property type="nucleotide sequence ID" value="NC_007947.1"/>
</dbReference>
<dbReference type="SMR" id="Q1H4H6"/>
<dbReference type="STRING" id="265072.Mfla_0340"/>
<dbReference type="KEGG" id="mfa:Mfla_0340"/>
<dbReference type="eggNOG" id="COG0129">
    <property type="taxonomic scope" value="Bacteria"/>
</dbReference>
<dbReference type="HOGENOM" id="CLU_014271_4_2_4"/>
<dbReference type="OrthoDB" id="9807077at2"/>
<dbReference type="UniPathway" id="UPA00047">
    <property type="reaction ID" value="UER00057"/>
</dbReference>
<dbReference type="UniPathway" id="UPA00049">
    <property type="reaction ID" value="UER00061"/>
</dbReference>
<dbReference type="Proteomes" id="UP000002440">
    <property type="component" value="Chromosome"/>
</dbReference>
<dbReference type="GO" id="GO:0005829">
    <property type="term" value="C:cytosol"/>
    <property type="evidence" value="ECO:0007669"/>
    <property type="project" value="TreeGrafter"/>
</dbReference>
<dbReference type="GO" id="GO:0051537">
    <property type="term" value="F:2 iron, 2 sulfur cluster binding"/>
    <property type="evidence" value="ECO:0007669"/>
    <property type="project" value="UniProtKB-UniRule"/>
</dbReference>
<dbReference type="GO" id="GO:0004160">
    <property type="term" value="F:dihydroxy-acid dehydratase activity"/>
    <property type="evidence" value="ECO:0007669"/>
    <property type="project" value="UniProtKB-UniRule"/>
</dbReference>
<dbReference type="GO" id="GO:0000287">
    <property type="term" value="F:magnesium ion binding"/>
    <property type="evidence" value="ECO:0007669"/>
    <property type="project" value="UniProtKB-UniRule"/>
</dbReference>
<dbReference type="GO" id="GO:0009097">
    <property type="term" value="P:isoleucine biosynthetic process"/>
    <property type="evidence" value="ECO:0007669"/>
    <property type="project" value="UniProtKB-UniRule"/>
</dbReference>
<dbReference type="GO" id="GO:0009099">
    <property type="term" value="P:L-valine biosynthetic process"/>
    <property type="evidence" value="ECO:0007669"/>
    <property type="project" value="UniProtKB-UniRule"/>
</dbReference>
<dbReference type="FunFam" id="3.50.30.80:FF:000001">
    <property type="entry name" value="Dihydroxy-acid dehydratase"/>
    <property type="match status" value="1"/>
</dbReference>
<dbReference type="Gene3D" id="3.50.30.80">
    <property type="entry name" value="IlvD/EDD C-terminal domain-like"/>
    <property type="match status" value="1"/>
</dbReference>
<dbReference type="HAMAP" id="MF_00012">
    <property type="entry name" value="IlvD"/>
    <property type="match status" value="1"/>
</dbReference>
<dbReference type="InterPro" id="IPR042096">
    <property type="entry name" value="Dihydro-acid_dehy_C"/>
</dbReference>
<dbReference type="InterPro" id="IPR004404">
    <property type="entry name" value="DihydroxyA_deHydtase"/>
</dbReference>
<dbReference type="InterPro" id="IPR020558">
    <property type="entry name" value="DiOHA_6PGluconate_deHydtase_CS"/>
</dbReference>
<dbReference type="InterPro" id="IPR056740">
    <property type="entry name" value="ILV_EDD_C"/>
</dbReference>
<dbReference type="InterPro" id="IPR000581">
    <property type="entry name" value="ILV_EDD_N"/>
</dbReference>
<dbReference type="InterPro" id="IPR037237">
    <property type="entry name" value="IlvD/EDD_N"/>
</dbReference>
<dbReference type="NCBIfam" id="TIGR00110">
    <property type="entry name" value="ilvD"/>
    <property type="match status" value="1"/>
</dbReference>
<dbReference type="NCBIfam" id="NF009103">
    <property type="entry name" value="PRK12448.1"/>
    <property type="match status" value="1"/>
</dbReference>
<dbReference type="PANTHER" id="PTHR43661">
    <property type="entry name" value="D-XYLONATE DEHYDRATASE"/>
    <property type="match status" value="1"/>
</dbReference>
<dbReference type="PANTHER" id="PTHR43661:SF3">
    <property type="entry name" value="D-XYLONATE DEHYDRATASE YAGF-RELATED"/>
    <property type="match status" value="1"/>
</dbReference>
<dbReference type="Pfam" id="PF24877">
    <property type="entry name" value="ILV_EDD_C"/>
    <property type="match status" value="1"/>
</dbReference>
<dbReference type="Pfam" id="PF00920">
    <property type="entry name" value="ILVD_EDD_N"/>
    <property type="match status" value="1"/>
</dbReference>
<dbReference type="SUPFAM" id="SSF143975">
    <property type="entry name" value="IlvD/EDD N-terminal domain-like"/>
    <property type="match status" value="1"/>
</dbReference>
<dbReference type="SUPFAM" id="SSF52016">
    <property type="entry name" value="LeuD/IlvD-like"/>
    <property type="match status" value="1"/>
</dbReference>
<dbReference type="PROSITE" id="PS00886">
    <property type="entry name" value="ILVD_EDD_1"/>
    <property type="match status" value="1"/>
</dbReference>
<dbReference type="PROSITE" id="PS00887">
    <property type="entry name" value="ILVD_EDD_2"/>
    <property type="match status" value="1"/>
</dbReference>
<gene>
    <name evidence="1" type="primary">ilvD</name>
    <name type="ordered locus">Mfla_0340</name>
</gene>